<proteinExistence type="inferred from homology"/>
<sequence length="347" mass="39049">MTKRDFIDTNTYTKEEIQYMIDLGIKIKESIKNGYYPPLLKNKTLGMIFEQSSTRTRTSAEAAMTELGGHAQYLAPGQIQLGGHETIEDTSQVLGRILDIIGARVERHHTVAEVGKFAKVPVVNFMSDYNHPTQELGDIITMTEHLPKGKKLSDCKIVFVGDATQVCVSTMFMATKMGMDFVQFGPKGFQIKPETLKIGQQNAKVSGGSVTITEDADEAFKDADFIYTDVWYGLYEAELSEEDRMKIFYPKYQVNAELVAKASDHVKFMHCLPATRGEEVTDEVIDSDYSIVWDEAENRKTAMRAIFVYLLNPELRKAQASQAVADKYDAEFSLMLRNAVDDQRNAD</sequence>
<gene>
    <name evidence="1" type="primary">ptcA</name>
    <name type="ordered locus">LVIS_2210</name>
</gene>
<name>PTC_LEVBA</name>
<dbReference type="EC" id="2.1.3.6" evidence="1"/>
<dbReference type="EMBL" id="CP000416">
    <property type="protein sequence ID" value="ABJ65260.1"/>
    <property type="molecule type" value="Genomic_DNA"/>
</dbReference>
<dbReference type="RefSeq" id="WP_011668781.1">
    <property type="nucleotide sequence ID" value="NC_008497.1"/>
</dbReference>
<dbReference type="SMR" id="Q03NG2"/>
<dbReference type="STRING" id="387344.LVIS_2210"/>
<dbReference type="KEGG" id="lbr:LVIS_2210"/>
<dbReference type="PATRIC" id="fig|387344.15.peg.2116"/>
<dbReference type="eggNOG" id="COG0078">
    <property type="taxonomic scope" value="Bacteria"/>
</dbReference>
<dbReference type="HOGENOM" id="CLU_043846_3_1_9"/>
<dbReference type="UniPathway" id="UPA00534">
    <property type="reaction ID" value="UER00941"/>
</dbReference>
<dbReference type="Proteomes" id="UP000001652">
    <property type="component" value="Chromosome"/>
</dbReference>
<dbReference type="GO" id="GO:0005737">
    <property type="term" value="C:cytoplasm"/>
    <property type="evidence" value="ECO:0007669"/>
    <property type="project" value="UniProtKB-SubCell"/>
</dbReference>
<dbReference type="GO" id="GO:0016597">
    <property type="term" value="F:amino acid binding"/>
    <property type="evidence" value="ECO:0007669"/>
    <property type="project" value="InterPro"/>
</dbReference>
<dbReference type="GO" id="GO:0004585">
    <property type="term" value="F:ornithine carbamoyltransferase activity"/>
    <property type="evidence" value="ECO:0007669"/>
    <property type="project" value="TreeGrafter"/>
</dbReference>
<dbReference type="GO" id="GO:0050231">
    <property type="term" value="F:putrescine carbamoyltransferase activity"/>
    <property type="evidence" value="ECO:0007669"/>
    <property type="project" value="UniProtKB-UniRule"/>
</dbReference>
<dbReference type="GO" id="GO:0042450">
    <property type="term" value="P:arginine biosynthetic process via ornithine"/>
    <property type="evidence" value="ECO:0007669"/>
    <property type="project" value="TreeGrafter"/>
</dbReference>
<dbReference type="GO" id="GO:0019240">
    <property type="term" value="P:citrulline biosynthetic process"/>
    <property type="evidence" value="ECO:0007669"/>
    <property type="project" value="TreeGrafter"/>
</dbReference>
<dbReference type="GO" id="GO:0033390">
    <property type="term" value="P:putrescine biosynthetic process from arginine via N-carbamoylputrescine"/>
    <property type="evidence" value="ECO:0007669"/>
    <property type="project" value="UniProtKB-UniRule"/>
</dbReference>
<dbReference type="FunFam" id="3.40.50.1370:FF:000008">
    <property type="entry name" value="Ornithine carbamoyltransferase"/>
    <property type="match status" value="1"/>
</dbReference>
<dbReference type="Gene3D" id="3.40.50.1370">
    <property type="entry name" value="Aspartate/ornithine carbamoyltransferase"/>
    <property type="match status" value="2"/>
</dbReference>
<dbReference type="HAMAP" id="MF_02102">
    <property type="entry name" value="PTCase"/>
    <property type="match status" value="1"/>
</dbReference>
<dbReference type="InterPro" id="IPR006132">
    <property type="entry name" value="Asp/Orn_carbamoyltranf_P-bd"/>
</dbReference>
<dbReference type="InterPro" id="IPR006130">
    <property type="entry name" value="Asp/Orn_carbamoylTrfase"/>
</dbReference>
<dbReference type="InterPro" id="IPR036901">
    <property type="entry name" value="Asp/Orn_carbamoylTrfase_sf"/>
</dbReference>
<dbReference type="InterPro" id="IPR006131">
    <property type="entry name" value="Asp_carbamoyltransf_Asp/Orn-bd"/>
</dbReference>
<dbReference type="InterPro" id="IPR002292">
    <property type="entry name" value="Orn/put_carbamltrans"/>
</dbReference>
<dbReference type="InterPro" id="IPR024903">
    <property type="entry name" value="PtcA"/>
</dbReference>
<dbReference type="NCBIfam" id="TIGR00658">
    <property type="entry name" value="orni_carb_tr"/>
    <property type="match status" value="1"/>
</dbReference>
<dbReference type="NCBIfam" id="NF001986">
    <property type="entry name" value="PRK00779.1"/>
    <property type="match status" value="1"/>
</dbReference>
<dbReference type="NCBIfam" id="TIGR04384">
    <property type="entry name" value="putr_carbamoyl"/>
    <property type="match status" value="1"/>
</dbReference>
<dbReference type="PANTHER" id="PTHR45753">
    <property type="entry name" value="ORNITHINE CARBAMOYLTRANSFERASE, MITOCHONDRIAL"/>
    <property type="match status" value="1"/>
</dbReference>
<dbReference type="PANTHER" id="PTHR45753:SF3">
    <property type="entry name" value="ORNITHINE TRANSCARBAMYLASE, MITOCHONDRIAL"/>
    <property type="match status" value="1"/>
</dbReference>
<dbReference type="Pfam" id="PF00185">
    <property type="entry name" value="OTCace"/>
    <property type="match status" value="1"/>
</dbReference>
<dbReference type="Pfam" id="PF02729">
    <property type="entry name" value="OTCace_N"/>
    <property type="match status" value="1"/>
</dbReference>
<dbReference type="PRINTS" id="PR00100">
    <property type="entry name" value="AOTCASE"/>
</dbReference>
<dbReference type="PRINTS" id="PR00102">
    <property type="entry name" value="OTCASE"/>
</dbReference>
<dbReference type="SUPFAM" id="SSF53671">
    <property type="entry name" value="Aspartate/ornithine carbamoyltransferase"/>
    <property type="match status" value="1"/>
</dbReference>
<reference key="1">
    <citation type="journal article" date="2006" name="Proc. Natl. Acad. Sci. U.S.A.">
        <title>Comparative genomics of the lactic acid bacteria.</title>
        <authorList>
            <person name="Makarova K.S."/>
            <person name="Slesarev A."/>
            <person name="Wolf Y.I."/>
            <person name="Sorokin A."/>
            <person name="Mirkin B."/>
            <person name="Koonin E.V."/>
            <person name="Pavlov A."/>
            <person name="Pavlova N."/>
            <person name="Karamychev V."/>
            <person name="Polouchine N."/>
            <person name="Shakhova V."/>
            <person name="Grigoriev I."/>
            <person name="Lou Y."/>
            <person name="Rohksar D."/>
            <person name="Lucas S."/>
            <person name="Huang K."/>
            <person name="Goodstein D.M."/>
            <person name="Hawkins T."/>
            <person name="Plengvidhya V."/>
            <person name="Welker D."/>
            <person name="Hughes J."/>
            <person name="Goh Y."/>
            <person name="Benson A."/>
            <person name="Baldwin K."/>
            <person name="Lee J.-H."/>
            <person name="Diaz-Muniz I."/>
            <person name="Dosti B."/>
            <person name="Smeianov V."/>
            <person name="Wechter W."/>
            <person name="Barabote R."/>
            <person name="Lorca G."/>
            <person name="Altermann E."/>
            <person name="Barrangou R."/>
            <person name="Ganesan B."/>
            <person name="Xie Y."/>
            <person name="Rawsthorne H."/>
            <person name="Tamir D."/>
            <person name="Parker C."/>
            <person name="Breidt F."/>
            <person name="Broadbent J.R."/>
            <person name="Hutkins R."/>
            <person name="O'Sullivan D."/>
            <person name="Steele J."/>
            <person name="Unlu G."/>
            <person name="Saier M.H. Jr."/>
            <person name="Klaenhammer T."/>
            <person name="Richardson P."/>
            <person name="Kozyavkin S."/>
            <person name="Weimer B.C."/>
            <person name="Mills D.A."/>
        </authorList>
    </citation>
    <scope>NUCLEOTIDE SEQUENCE [LARGE SCALE GENOMIC DNA]</scope>
    <source>
        <strain>ATCC 367 / BCRC 12310 / CIP 105137 / JCM 1170 / LMG 11437 / NCIMB 947 / NCTC 947</strain>
    </source>
</reference>
<keyword id="KW-0963">Cytoplasm</keyword>
<keyword id="KW-0620">Polyamine biosynthesis</keyword>
<keyword id="KW-1185">Reference proteome</keyword>
<keyword id="KW-0808">Transferase</keyword>
<evidence type="ECO:0000255" key="1">
    <source>
        <dbReference type="HAMAP-Rule" id="MF_02102"/>
    </source>
</evidence>
<feature type="chain" id="PRO_0000380718" description="Putrescine carbamoyltransferase">
    <location>
        <begin position="1"/>
        <end position="347"/>
    </location>
</feature>
<feature type="binding site" evidence="1">
    <location>
        <begin position="53"/>
        <end position="57"/>
    </location>
    <ligand>
        <name>carbamoyl phosphate</name>
        <dbReference type="ChEBI" id="CHEBI:58228"/>
    </ligand>
</feature>
<feature type="binding site" evidence="1">
    <location>
        <position position="104"/>
    </location>
    <ligand>
        <name>carbamoyl phosphate</name>
        <dbReference type="ChEBI" id="CHEBI:58228"/>
    </ligand>
</feature>
<feature type="binding site" evidence="1">
    <location>
        <position position="131"/>
    </location>
    <ligand>
        <name>carbamoyl phosphate</name>
        <dbReference type="ChEBI" id="CHEBI:58228"/>
    </ligand>
</feature>
<feature type="binding site" evidence="1">
    <location>
        <begin position="270"/>
        <end position="273"/>
    </location>
    <ligand>
        <name>putrescine</name>
        <dbReference type="ChEBI" id="CHEBI:326268"/>
    </ligand>
</feature>
<feature type="site" description="Important for structural integrity" evidence="1">
    <location>
        <position position="28"/>
    </location>
</feature>
<feature type="site" description="Important for structural integrity" evidence="1">
    <location>
        <position position="144"/>
    </location>
</feature>
<protein>
    <recommendedName>
        <fullName evidence="1">Putrescine carbamoyltransferase</fullName>
        <shortName evidence="1">PTC</shortName>
        <shortName evidence="1">PTCase</shortName>
        <ecNumber evidence="1">2.1.3.6</ecNumber>
    </recommendedName>
    <alternativeName>
        <fullName evidence="1">Putrescine transcarbamoylase</fullName>
    </alternativeName>
    <alternativeName>
        <fullName evidence="1">Putrescine transcarbamylase</fullName>
    </alternativeName>
</protein>
<comment type="function">
    <text evidence="1">Catalyzes the phosphorolysis of N-carbamoylputrescine to form carbamoyl phosphate and putrescine. Is involved in the degradation pathway of the polyamine agmatine.</text>
</comment>
<comment type="catalytic activity">
    <reaction evidence="1">
        <text>carbamoyl phosphate + putrescine = N-carbamoylputrescine + phosphate + H(+)</text>
        <dbReference type="Rhea" id="RHEA:21936"/>
        <dbReference type="ChEBI" id="CHEBI:15378"/>
        <dbReference type="ChEBI" id="CHEBI:43474"/>
        <dbReference type="ChEBI" id="CHEBI:58228"/>
        <dbReference type="ChEBI" id="CHEBI:58318"/>
        <dbReference type="ChEBI" id="CHEBI:326268"/>
        <dbReference type="EC" id="2.1.3.6"/>
    </reaction>
</comment>
<comment type="pathway">
    <text evidence="1">Amine and polyamine biosynthesis; putrescine biosynthesis via agmatine pathway; putrescine from N-carbamoylputrescine (transferase route): step 1/1.</text>
</comment>
<comment type="subunit">
    <text evidence="1">Homotrimer.</text>
</comment>
<comment type="subcellular location">
    <subcellularLocation>
        <location evidence="1">Cytoplasm</location>
    </subcellularLocation>
</comment>
<comment type="similarity">
    <text evidence="1">Belongs to the aspartate/ornithine carbamoyltransferase superfamily. PTCase family.</text>
</comment>
<organism>
    <name type="scientific">Levilactobacillus brevis (strain ATCC 367 / BCRC 12310 / CIP 105137 / JCM 1170 / LMG 11437 / NCIMB 947 / NCTC 947)</name>
    <name type="common">Lactobacillus brevis</name>
    <dbReference type="NCBI Taxonomy" id="387344"/>
    <lineage>
        <taxon>Bacteria</taxon>
        <taxon>Bacillati</taxon>
        <taxon>Bacillota</taxon>
        <taxon>Bacilli</taxon>
        <taxon>Lactobacillales</taxon>
        <taxon>Lactobacillaceae</taxon>
        <taxon>Levilactobacillus</taxon>
    </lineage>
</organism>
<accession>Q03NG2</accession>